<protein>
    <recommendedName>
        <fullName evidence="2">Cryptide Pep-8</fullName>
    </recommendedName>
</protein>
<comment type="function">
    <text evidence="1">Does not induce hemolytic activity, lactate dehydrogenase (LDH) release from mast cells, mast cell degranulation, and antimicrobial effects. In vivo, injection into mice induces increase in nociceptive sensibility, but causes very reduced or no edema formation. It also reduces locomotion, suggesting an increase in anxiety, but causes no alteration in rearing (standing on hind limbs).</text>
</comment>
<comment type="subcellular location">
    <subcellularLocation>
        <location evidence="1">Secreted</location>
    </subcellularLocation>
</comment>
<comment type="tissue specificity">
    <text evidence="3">Expressed by the venom gland.</text>
</comment>
<comment type="mass spectrometry" mass="936.53" method="Electrospray" evidence="1"/>
<keyword id="KW-0903">Direct protein sequencing</keyword>
<keyword id="KW-0964">Secreted</keyword>
<accession>P0DRF3</accession>
<feature type="peptide" id="PRO_0000461743" description="Cryptide Pep-8" evidence="1">
    <location>
        <begin position="1"/>
        <end position="8"/>
    </location>
</feature>
<reference key="1">
    <citation type="journal article" date="2018" name="J. Proteomics">
        <title>Profiling the short, linear, non-disulfide bond-containing peptidome from the venom of the scorpion Tityus obscurus.</title>
        <authorList>
            <person name="Dias N.B."/>
            <person name="de Souza B.M."/>
            <person name="Cocchi F.K."/>
            <person name="Chalkidis H.M."/>
            <person name="Dorce V.A.C."/>
            <person name="Palma M.S."/>
        </authorList>
    </citation>
    <scope>PROTEIN SEQUENCE</scope>
    <scope>IDENTIFICATION BY MASS SPECTROMETRY</scope>
    <scope>MASS SPECTROMETRY</scope>
    <scope>SUBCELLULAR LOCATION</scope>
    <scope>SYNTHESIS</scope>
    <scope>FUNCTION</scope>
    <scope>BIOASSAY</scope>
    <source>
        <tissue>Venom</tissue>
    </source>
</reference>
<name>CRY8_TITOB</name>
<dbReference type="GO" id="GO:0005576">
    <property type="term" value="C:extracellular region"/>
    <property type="evidence" value="ECO:0007669"/>
    <property type="project" value="UniProtKB-SubCell"/>
</dbReference>
<sequence length="8" mass="937">KIITPPIR</sequence>
<organism>
    <name type="scientific">Tityus obscurus</name>
    <name type="common">Amazonian scorpion</name>
    <name type="synonym">Tityus cambridgei</name>
    <dbReference type="NCBI Taxonomy" id="1221240"/>
    <lineage>
        <taxon>Eukaryota</taxon>
        <taxon>Metazoa</taxon>
        <taxon>Ecdysozoa</taxon>
        <taxon>Arthropoda</taxon>
        <taxon>Chelicerata</taxon>
        <taxon>Arachnida</taxon>
        <taxon>Scorpiones</taxon>
        <taxon>Buthida</taxon>
        <taxon>Buthoidea</taxon>
        <taxon>Buthidae</taxon>
        <taxon>Tityus</taxon>
    </lineage>
</organism>
<evidence type="ECO:0000269" key="1">
    <source>
    </source>
</evidence>
<evidence type="ECO:0000303" key="2">
    <source>
    </source>
</evidence>
<evidence type="ECO:0000305" key="3">
    <source>
    </source>
</evidence>
<proteinExistence type="evidence at protein level"/>